<comment type="function">
    <text evidence="1">IGPS catalyzes the conversion of PRFAR and glutamine to IGP, AICAR and glutamate. The HisF subunit catalyzes the cyclization activity that produces IGP and AICAR from PRFAR using the ammonia provided by the HisH subunit.</text>
</comment>
<comment type="catalytic activity">
    <reaction evidence="1">
        <text>5-[(5-phospho-1-deoxy-D-ribulos-1-ylimino)methylamino]-1-(5-phospho-beta-D-ribosyl)imidazole-4-carboxamide + L-glutamine = D-erythro-1-(imidazol-4-yl)glycerol 3-phosphate + 5-amino-1-(5-phospho-beta-D-ribosyl)imidazole-4-carboxamide + L-glutamate + H(+)</text>
        <dbReference type="Rhea" id="RHEA:24793"/>
        <dbReference type="ChEBI" id="CHEBI:15378"/>
        <dbReference type="ChEBI" id="CHEBI:29985"/>
        <dbReference type="ChEBI" id="CHEBI:58278"/>
        <dbReference type="ChEBI" id="CHEBI:58359"/>
        <dbReference type="ChEBI" id="CHEBI:58475"/>
        <dbReference type="ChEBI" id="CHEBI:58525"/>
        <dbReference type="EC" id="4.3.2.10"/>
    </reaction>
</comment>
<comment type="pathway">
    <text evidence="1">Amino-acid biosynthesis; L-histidine biosynthesis; L-histidine from 5-phospho-alpha-D-ribose 1-diphosphate: step 5/9.</text>
</comment>
<comment type="subunit">
    <text evidence="1">Heterodimer of HisH and HisF.</text>
</comment>
<comment type="subcellular location">
    <subcellularLocation>
        <location evidence="1">Cytoplasm</location>
    </subcellularLocation>
</comment>
<comment type="similarity">
    <text evidence="1">Belongs to the HisA/HisF family.</text>
</comment>
<reference key="1">
    <citation type="submission" date="2008-05" db="EMBL/GenBank/DDBJ databases">
        <title>Complete sequence of Chlorobium limicola DSM 245.</title>
        <authorList>
            <consortium name="US DOE Joint Genome Institute"/>
            <person name="Lucas S."/>
            <person name="Copeland A."/>
            <person name="Lapidus A."/>
            <person name="Glavina del Rio T."/>
            <person name="Dalin E."/>
            <person name="Tice H."/>
            <person name="Bruce D."/>
            <person name="Goodwin L."/>
            <person name="Pitluck S."/>
            <person name="Schmutz J."/>
            <person name="Larimer F."/>
            <person name="Land M."/>
            <person name="Hauser L."/>
            <person name="Kyrpides N."/>
            <person name="Ovchinnikova G."/>
            <person name="Zhao F."/>
            <person name="Li T."/>
            <person name="Liu Z."/>
            <person name="Overmann J."/>
            <person name="Bryant D.A."/>
            <person name="Richardson P."/>
        </authorList>
    </citation>
    <scope>NUCLEOTIDE SEQUENCE [LARGE SCALE GENOMIC DNA]</scope>
    <source>
        <strain>DSM 245 / NBRC 103803 / 6330</strain>
    </source>
</reference>
<sequence length="251" mass="27411">MLAKRIIPCLDVTGGRVVKGINFEGLRDAGSILEQARFYNGELADELVFLDISASVESRKTTLEEVLKVSGEVFIPLTVGGGINSVDRAREIFMHGADKVSVNTAVVKEPELISRIAEKYGSQAVVVAIDVKKKDDRYMVHTHSGKIPTPLEAVEWAQMVQELGAGEILLTSMDRDGTQEGYDNDILAKVSTSVHIPVIASGGAGNLEHLYDGFTRGKADAALAASIFHFRQYSIRQAKQYLRDRGIPVRL</sequence>
<protein>
    <recommendedName>
        <fullName evidence="1">Imidazole glycerol phosphate synthase subunit HisF</fullName>
        <ecNumber evidence="1">4.3.2.10</ecNumber>
    </recommendedName>
    <alternativeName>
        <fullName evidence="1">IGP synthase cyclase subunit</fullName>
    </alternativeName>
    <alternativeName>
        <fullName evidence="1">IGP synthase subunit HisF</fullName>
    </alternativeName>
    <alternativeName>
        <fullName evidence="1">ImGP synthase subunit HisF</fullName>
        <shortName evidence="1">IGPS subunit HisF</shortName>
    </alternativeName>
</protein>
<organism>
    <name type="scientific">Chlorobium limicola (strain DSM 245 / NBRC 103803 / 6330)</name>
    <dbReference type="NCBI Taxonomy" id="290315"/>
    <lineage>
        <taxon>Bacteria</taxon>
        <taxon>Pseudomonadati</taxon>
        <taxon>Chlorobiota</taxon>
        <taxon>Chlorobiia</taxon>
        <taxon>Chlorobiales</taxon>
        <taxon>Chlorobiaceae</taxon>
        <taxon>Chlorobium/Pelodictyon group</taxon>
        <taxon>Chlorobium</taxon>
    </lineage>
</organism>
<feature type="chain" id="PRO_1000134978" description="Imidazole glycerol phosphate synthase subunit HisF">
    <location>
        <begin position="1"/>
        <end position="251"/>
    </location>
</feature>
<feature type="active site" evidence="1">
    <location>
        <position position="11"/>
    </location>
</feature>
<feature type="active site" evidence="1">
    <location>
        <position position="130"/>
    </location>
</feature>
<proteinExistence type="inferred from homology"/>
<gene>
    <name evidence="1" type="primary">hisF</name>
    <name type="ordered locus">Clim_1721</name>
</gene>
<name>HIS6_CHLL2</name>
<evidence type="ECO:0000255" key="1">
    <source>
        <dbReference type="HAMAP-Rule" id="MF_01013"/>
    </source>
</evidence>
<dbReference type="EC" id="4.3.2.10" evidence="1"/>
<dbReference type="EMBL" id="CP001097">
    <property type="protein sequence ID" value="ACD90762.1"/>
    <property type="molecule type" value="Genomic_DNA"/>
</dbReference>
<dbReference type="RefSeq" id="WP_012466635.1">
    <property type="nucleotide sequence ID" value="NC_010803.1"/>
</dbReference>
<dbReference type="SMR" id="B3EEF2"/>
<dbReference type="STRING" id="290315.Clim_1721"/>
<dbReference type="KEGG" id="cli:Clim_1721"/>
<dbReference type="eggNOG" id="COG0107">
    <property type="taxonomic scope" value="Bacteria"/>
</dbReference>
<dbReference type="HOGENOM" id="CLU_048577_4_0_10"/>
<dbReference type="OrthoDB" id="9781903at2"/>
<dbReference type="UniPathway" id="UPA00031">
    <property type="reaction ID" value="UER00010"/>
</dbReference>
<dbReference type="Proteomes" id="UP000008841">
    <property type="component" value="Chromosome"/>
</dbReference>
<dbReference type="GO" id="GO:0005737">
    <property type="term" value="C:cytoplasm"/>
    <property type="evidence" value="ECO:0007669"/>
    <property type="project" value="UniProtKB-SubCell"/>
</dbReference>
<dbReference type="GO" id="GO:0000107">
    <property type="term" value="F:imidazoleglycerol-phosphate synthase activity"/>
    <property type="evidence" value="ECO:0007669"/>
    <property type="project" value="UniProtKB-UniRule"/>
</dbReference>
<dbReference type="GO" id="GO:0016829">
    <property type="term" value="F:lyase activity"/>
    <property type="evidence" value="ECO:0007669"/>
    <property type="project" value="UniProtKB-KW"/>
</dbReference>
<dbReference type="GO" id="GO:0000105">
    <property type="term" value="P:L-histidine biosynthetic process"/>
    <property type="evidence" value="ECO:0007669"/>
    <property type="project" value="UniProtKB-UniRule"/>
</dbReference>
<dbReference type="CDD" id="cd04731">
    <property type="entry name" value="HisF"/>
    <property type="match status" value="1"/>
</dbReference>
<dbReference type="FunFam" id="3.20.20.70:FF:000006">
    <property type="entry name" value="Imidazole glycerol phosphate synthase subunit HisF"/>
    <property type="match status" value="1"/>
</dbReference>
<dbReference type="Gene3D" id="3.20.20.70">
    <property type="entry name" value="Aldolase class I"/>
    <property type="match status" value="1"/>
</dbReference>
<dbReference type="HAMAP" id="MF_01013">
    <property type="entry name" value="HisF"/>
    <property type="match status" value="1"/>
</dbReference>
<dbReference type="InterPro" id="IPR013785">
    <property type="entry name" value="Aldolase_TIM"/>
</dbReference>
<dbReference type="InterPro" id="IPR006062">
    <property type="entry name" value="His_biosynth"/>
</dbReference>
<dbReference type="InterPro" id="IPR004651">
    <property type="entry name" value="HisF"/>
</dbReference>
<dbReference type="InterPro" id="IPR050064">
    <property type="entry name" value="IGPS_HisA/HisF"/>
</dbReference>
<dbReference type="InterPro" id="IPR011060">
    <property type="entry name" value="RibuloseP-bd_barrel"/>
</dbReference>
<dbReference type="NCBIfam" id="TIGR00735">
    <property type="entry name" value="hisF"/>
    <property type="match status" value="1"/>
</dbReference>
<dbReference type="PANTHER" id="PTHR21235:SF2">
    <property type="entry name" value="IMIDAZOLE GLYCEROL PHOSPHATE SYNTHASE HISHF"/>
    <property type="match status" value="1"/>
</dbReference>
<dbReference type="PANTHER" id="PTHR21235">
    <property type="entry name" value="IMIDAZOLE GLYCEROL PHOSPHATE SYNTHASE SUBUNIT HISF/H IGP SYNTHASE SUBUNIT HISF/H"/>
    <property type="match status" value="1"/>
</dbReference>
<dbReference type="Pfam" id="PF00977">
    <property type="entry name" value="His_biosynth"/>
    <property type="match status" value="1"/>
</dbReference>
<dbReference type="SUPFAM" id="SSF51366">
    <property type="entry name" value="Ribulose-phoshate binding barrel"/>
    <property type="match status" value="1"/>
</dbReference>
<keyword id="KW-0028">Amino-acid biosynthesis</keyword>
<keyword id="KW-0963">Cytoplasm</keyword>
<keyword id="KW-0368">Histidine biosynthesis</keyword>
<keyword id="KW-0456">Lyase</keyword>
<accession>B3EEF2</accession>